<comment type="function">
    <text>Catalyzes xyloglucan endohydrolysis (XEH) and/or endotransglycosylation (XET). Cleaves and religates xyloglucan polymers, an essential constituent of the primary cell wall, and thereby participates in cell wall construction of growing tissues.</text>
</comment>
<comment type="catalytic activity">
    <reaction>
        <text>breaks a beta-(1-&gt;4) bond in the backbone of a xyloglucan and transfers the xyloglucanyl segment on to O-4 of the non-reducing terminal glucose residue of an acceptor, which can be a xyloglucan or an oligosaccharide of xyloglucan.</text>
        <dbReference type="EC" id="2.4.1.207"/>
    </reaction>
</comment>
<comment type="subcellular location">
    <subcellularLocation>
        <location evidence="6">Secreted</location>
        <location evidence="6">Cell wall</location>
    </subcellularLocation>
    <subcellularLocation>
        <location evidence="6">Secreted</location>
        <location evidence="6">Extracellular space</location>
        <location evidence="6">Apoplast</location>
    </subcellularLocation>
</comment>
<comment type="PTM">
    <text evidence="1">Contains at least one intrachain disulfide bond essential for its enzymatic activity.</text>
</comment>
<comment type="similarity">
    <text evidence="7">Belongs to the glycosyl hydrolase 16 family. XTH group 1 subfamily.</text>
</comment>
<accession>P93349</accession>
<name>XTH_TOBAC</name>
<keyword id="KW-0052">Apoplast</keyword>
<keyword id="KW-0134">Cell wall</keyword>
<keyword id="KW-0961">Cell wall biogenesis/degradation</keyword>
<keyword id="KW-1015">Disulfide bond</keyword>
<keyword id="KW-0325">Glycoprotein</keyword>
<keyword id="KW-0326">Glycosidase</keyword>
<keyword id="KW-0378">Hydrolase</keyword>
<keyword id="KW-1185">Reference proteome</keyword>
<keyword id="KW-0964">Secreted</keyword>
<keyword id="KW-0732">Signal</keyword>
<keyword id="KW-0808">Transferase</keyword>
<dbReference type="EC" id="2.4.1.207"/>
<dbReference type="EMBL" id="D86730">
    <property type="protein sequence ID" value="BAA13163.1"/>
    <property type="molecule type" value="mRNA"/>
</dbReference>
<dbReference type="RefSeq" id="NP_001312331.1">
    <property type="nucleotide sequence ID" value="NM_001325402.1"/>
</dbReference>
<dbReference type="SMR" id="P93349"/>
<dbReference type="STRING" id="4097.P93349"/>
<dbReference type="CAZy" id="GH16">
    <property type="family name" value="Glycoside Hydrolase Family 16"/>
</dbReference>
<dbReference type="GlyCosmos" id="P93349">
    <property type="glycosylation" value="1 site, No reported glycans"/>
</dbReference>
<dbReference type="PaxDb" id="4097-P93349"/>
<dbReference type="GeneID" id="107785465"/>
<dbReference type="KEGG" id="nta:107785465"/>
<dbReference type="OMA" id="HHIKFLN"/>
<dbReference type="OrthoDB" id="4781at2759"/>
<dbReference type="PhylomeDB" id="P93349"/>
<dbReference type="BRENDA" id="2.4.1.207">
    <property type="organism ID" value="3645"/>
</dbReference>
<dbReference type="Proteomes" id="UP000084051">
    <property type="component" value="Unplaced"/>
</dbReference>
<dbReference type="GO" id="GO:0048046">
    <property type="term" value="C:apoplast"/>
    <property type="evidence" value="ECO:0007669"/>
    <property type="project" value="UniProtKB-SubCell"/>
</dbReference>
<dbReference type="GO" id="GO:0004553">
    <property type="term" value="F:hydrolase activity, hydrolyzing O-glycosyl compounds"/>
    <property type="evidence" value="ECO:0007669"/>
    <property type="project" value="InterPro"/>
</dbReference>
<dbReference type="GO" id="GO:0030247">
    <property type="term" value="F:polysaccharide binding"/>
    <property type="evidence" value="ECO:0000250"/>
    <property type="project" value="UniProtKB"/>
</dbReference>
<dbReference type="GO" id="GO:0016762">
    <property type="term" value="F:xyloglucan:xyloglucosyl transferase activity"/>
    <property type="evidence" value="ECO:0007669"/>
    <property type="project" value="UniProtKB-EC"/>
</dbReference>
<dbReference type="GO" id="GO:0042546">
    <property type="term" value="P:cell wall biogenesis"/>
    <property type="evidence" value="ECO:0007669"/>
    <property type="project" value="InterPro"/>
</dbReference>
<dbReference type="GO" id="GO:0071555">
    <property type="term" value="P:cell wall organization"/>
    <property type="evidence" value="ECO:0007669"/>
    <property type="project" value="UniProtKB-KW"/>
</dbReference>
<dbReference type="GO" id="GO:0010411">
    <property type="term" value="P:xyloglucan metabolic process"/>
    <property type="evidence" value="ECO:0007669"/>
    <property type="project" value="InterPro"/>
</dbReference>
<dbReference type="CDD" id="cd02176">
    <property type="entry name" value="GH16_XET"/>
    <property type="match status" value="1"/>
</dbReference>
<dbReference type="FunFam" id="2.60.120.200:FF:000025">
    <property type="entry name" value="Xyloglucan endotransglucosylase/hydrolase"/>
    <property type="match status" value="1"/>
</dbReference>
<dbReference type="Gene3D" id="2.60.120.200">
    <property type="match status" value="1"/>
</dbReference>
<dbReference type="InterPro" id="IPR044791">
    <property type="entry name" value="Beta-glucanase/XTH"/>
</dbReference>
<dbReference type="InterPro" id="IPR013320">
    <property type="entry name" value="ConA-like_dom_sf"/>
</dbReference>
<dbReference type="InterPro" id="IPR000757">
    <property type="entry name" value="GH16"/>
</dbReference>
<dbReference type="InterPro" id="IPR008263">
    <property type="entry name" value="GH16_AS"/>
</dbReference>
<dbReference type="InterPro" id="IPR010713">
    <property type="entry name" value="XET_C"/>
</dbReference>
<dbReference type="InterPro" id="IPR016455">
    <property type="entry name" value="XTH"/>
</dbReference>
<dbReference type="PANTHER" id="PTHR31062">
    <property type="entry name" value="XYLOGLUCAN ENDOTRANSGLUCOSYLASE/HYDROLASE PROTEIN 8-RELATED"/>
    <property type="match status" value="1"/>
</dbReference>
<dbReference type="Pfam" id="PF00722">
    <property type="entry name" value="Glyco_hydro_16"/>
    <property type="match status" value="1"/>
</dbReference>
<dbReference type="Pfam" id="PF06955">
    <property type="entry name" value="XET_C"/>
    <property type="match status" value="1"/>
</dbReference>
<dbReference type="PIRSF" id="PIRSF005604">
    <property type="entry name" value="XET"/>
    <property type="match status" value="1"/>
</dbReference>
<dbReference type="SUPFAM" id="SSF49899">
    <property type="entry name" value="Concanavalin A-like lectins/glucanases"/>
    <property type="match status" value="1"/>
</dbReference>
<dbReference type="PROSITE" id="PS01034">
    <property type="entry name" value="GH16_1"/>
    <property type="match status" value="1"/>
</dbReference>
<dbReference type="PROSITE" id="PS51762">
    <property type="entry name" value="GH16_2"/>
    <property type="match status" value="1"/>
</dbReference>
<protein>
    <recommendedName>
        <fullName>Probable xyloglucan endotransglucosylase/hydrolase protein</fullName>
        <ecNumber>2.4.1.207</ecNumber>
    </recommendedName>
</protein>
<feature type="signal peptide" evidence="3">
    <location>
        <begin position="1"/>
        <end position="21"/>
    </location>
</feature>
<feature type="chain" id="PRO_0000011840" description="Probable xyloglucan endotransglucosylase/hydrolase protein">
    <location>
        <begin position="22"/>
        <end position="295"/>
    </location>
</feature>
<feature type="domain" description="GH16" evidence="4">
    <location>
        <begin position="22"/>
        <end position="220"/>
    </location>
</feature>
<feature type="active site" description="Nucleophile" evidence="5">
    <location>
        <position position="106"/>
    </location>
</feature>
<feature type="active site" description="Proton donor" evidence="5">
    <location>
        <position position="110"/>
    </location>
</feature>
<feature type="binding site" evidence="2">
    <location>
        <position position="110"/>
    </location>
    <ligand>
        <name>xyloglucan</name>
        <dbReference type="ChEBI" id="CHEBI:18233"/>
    </ligand>
</feature>
<feature type="binding site" evidence="2">
    <location>
        <begin position="123"/>
        <end position="125"/>
    </location>
    <ligand>
        <name>xyloglucan</name>
        <dbReference type="ChEBI" id="CHEBI:18233"/>
    </ligand>
</feature>
<feature type="binding site" evidence="2">
    <location>
        <begin position="133"/>
        <end position="135"/>
    </location>
    <ligand>
        <name>xyloglucan</name>
        <dbReference type="ChEBI" id="CHEBI:18233"/>
    </ligand>
</feature>
<feature type="binding site" evidence="2">
    <location>
        <begin position="199"/>
        <end position="200"/>
    </location>
    <ligand>
        <name>xyloglucan</name>
        <dbReference type="ChEBI" id="CHEBI:18233"/>
    </ligand>
</feature>
<feature type="binding site" evidence="2">
    <location>
        <position position="204"/>
    </location>
    <ligand>
        <name>xyloglucan</name>
        <dbReference type="ChEBI" id="CHEBI:18233"/>
    </ligand>
</feature>
<feature type="binding site" evidence="2">
    <location>
        <position position="281"/>
    </location>
    <ligand>
        <name>xyloglucan</name>
        <dbReference type="ChEBI" id="CHEBI:18233"/>
    </ligand>
</feature>
<feature type="site" description="Important for catalytic activity" evidence="2">
    <location>
        <position position="108"/>
    </location>
</feature>
<feature type="glycosylation site" description="N-linked (GlcNAc...) asparagine" evidence="3">
    <location>
        <position position="114"/>
    </location>
</feature>
<feature type="disulfide bond" evidence="2">
    <location>
        <begin position="228"/>
        <end position="239"/>
    </location>
</feature>
<feature type="disulfide bond" evidence="2">
    <location>
        <begin position="276"/>
        <end position="289"/>
    </location>
</feature>
<proteinExistence type="evidence at transcript level"/>
<reference key="1">
    <citation type="submission" date="1996-07" db="EMBL/GenBank/DDBJ databases">
        <title>Endo-xyloglucan transferase (EXGT).</title>
        <authorList>
            <person name="Nishitani K."/>
            <person name="Okazawa K."/>
            <person name="Takeda S."/>
            <person name="Asada K."/>
            <person name="Kato I."/>
        </authorList>
    </citation>
    <scope>NUCLEOTIDE SEQUENCE [MRNA]</scope>
</reference>
<reference key="2">
    <citation type="journal article" date="2001" name="Plant Cell Physiol.">
        <title>Endoxyloglucan transferase is localized both in the cell plate and in the secretory pathway destined for the apoplast in tobacco cells.</title>
        <authorList>
            <person name="Yokoyama R."/>
            <person name="Nishitani K."/>
        </authorList>
    </citation>
    <scope>SUBCELLULAR LOCATION</scope>
</reference>
<organism>
    <name type="scientific">Nicotiana tabacum</name>
    <name type="common">Common tobacco</name>
    <dbReference type="NCBI Taxonomy" id="4097"/>
    <lineage>
        <taxon>Eukaryota</taxon>
        <taxon>Viridiplantae</taxon>
        <taxon>Streptophyta</taxon>
        <taxon>Embryophyta</taxon>
        <taxon>Tracheophyta</taxon>
        <taxon>Spermatophyta</taxon>
        <taxon>Magnoliopsida</taxon>
        <taxon>eudicotyledons</taxon>
        <taxon>Gunneridae</taxon>
        <taxon>Pentapetalae</taxon>
        <taxon>asterids</taxon>
        <taxon>lamiids</taxon>
        <taxon>Solanales</taxon>
        <taxon>Solanaceae</taxon>
        <taxon>Nicotianoideae</taxon>
        <taxon>Nicotianeae</taxon>
        <taxon>Nicotiana</taxon>
    </lineage>
</organism>
<gene>
    <name type="primary">XTH</name>
    <name type="synonym">EXGT</name>
</gene>
<sequence>MGVKGLLFSIVLINLSLLGLCGYPRKPVDVPFWKNYEPSWASHHIKYLSGGSTVDLVLDRSSGAGFQSKKSYLFGHFSMKLKLVGGDSAGVVTAFYLSSNNAEHDEIDFEFLGNRTGQPYILQTNVFTGGKGDREQRIYLWFDPTKGYHSYSVLWNTFQIVIFVDDVPIRAFKNSKDLGVKFPFNQPMKIYSSLWDADDWATRGGLEKTDWSNAPFTASYTSFHVDGCEAATPQEVQVCNTKGMRWWDQKAFQDLDALQYRRLRWVRQKYTIYNYCTDRKRYPTLPPECTKDRDI</sequence>
<evidence type="ECO:0000250" key="1"/>
<evidence type="ECO:0000250" key="2">
    <source>
        <dbReference type="UniProtKB" id="Q8GZD5"/>
    </source>
</evidence>
<evidence type="ECO:0000255" key="3"/>
<evidence type="ECO:0000255" key="4">
    <source>
        <dbReference type="PROSITE-ProRule" id="PRU01098"/>
    </source>
</evidence>
<evidence type="ECO:0000255" key="5">
    <source>
        <dbReference type="PROSITE-ProRule" id="PRU10064"/>
    </source>
</evidence>
<evidence type="ECO:0000269" key="6">
    <source>
    </source>
</evidence>
<evidence type="ECO:0000305" key="7"/>